<gene>
    <name evidence="1" type="primary">rpiA</name>
    <name type="ordered locus">Psyr_4847</name>
</gene>
<feature type="chain" id="PRO_1000016968" description="Ribose-5-phosphate isomerase A">
    <location>
        <begin position="1"/>
        <end position="223"/>
    </location>
</feature>
<feature type="active site" description="Proton acceptor" evidence="1">
    <location>
        <position position="107"/>
    </location>
</feature>
<feature type="binding site" evidence="1">
    <location>
        <begin position="32"/>
        <end position="35"/>
    </location>
    <ligand>
        <name>substrate</name>
    </ligand>
</feature>
<feature type="binding site" evidence="1">
    <location>
        <begin position="85"/>
        <end position="88"/>
    </location>
    <ligand>
        <name>substrate</name>
    </ligand>
</feature>
<feature type="binding site" evidence="1">
    <location>
        <begin position="98"/>
        <end position="101"/>
    </location>
    <ligand>
        <name>substrate</name>
    </ligand>
</feature>
<feature type="binding site" evidence="1">
    <location>
        <position position="125"/>
    </location>
    <ligand>
        <name>substrate</name>
    </ligand>
</feature>
<reference key="1">
    <citation type="journal article" date="2005" name="Proc. Natl. Acad. Sci. U.S.A.">
        <title>Comparison of the complete genome sequences of Pseudomonas syringae pv. syringae B728a and pv. tomato DC3000.</title>
        <authorList>
            <person name="Feil H."/>
            <person name="Feil W.S."/>
            <person name="Chain P."/>
            <person name="Larimer F."/>
            <person name="Dibartolo G."/>
            <person name="Copeland A."/>
            <person name="Lykidis A."/>
            <person name="Trong S."/>
            <person name="Nolan M."/>
            <person name="Goltsman E."/>
            <person name="Thiel J."/>
            <person name="Malfatti S."/>
            <person name="Loper J.E."/>
            <person name="Lapidus A."/>
            <person name="Detter J.C."/>
            <person name="Land M."/>
            <person name="Richardson P.M."/>
            <person name="Kyrpides N.C."/>
            <person name="Ivanova N."/>
            <person name="Lindow S.E."/>
        </authorList>
    </citation>
    <scope>NUCLEOTIDE SEQUENCE [LARGE SCALE GENOMIC DNA]</scope>
    <source>
        <strain>B728a</strain>
    </source>
</reference>
<keyword id="KW-0413">Isomerase</keyword>
<protein>
    <recommendedName>
        <fullName evidence="1">Ribose-5-phosphate isomerase A</fullName>
        <ecNumber evidence="1">5.3.1.6</ecNumber>
    </recommendedName>
    <alternativeName>
        <fullName evidence="1">Phosphoriboisomerase A</fullName>
        <shortName evidence="1">PRI</shortName>
    </alternativeName>
</protein>
<proteinExistence type="inferred from homology"/>
<sequence length="223" mass="23321">MTQDQLKQAVAQAAVDFILPKLDDKSIVGVGTGSTANCFIDALAKHKAAFDGAVASSQATAARLKAHGIPVYELNTVSDLEFYVDGADESDEHLNLIKGGGAALTREKIVAAVANTFICIADGSKLVPVLGAFPLPVEVIPMARSHVARQLVKLGGDPVYREGVLTDNGNIIIDVHNMSITNPVELEAQINAIVGVVTNGLFAARPADLLLLGTAEGVKTLTR</sequence>
<comment type="function">
    <text evidence="1">Catalyzes the reversible conversion of ribose-5-phosphate to ribulose 5-phosphate.</text>
</comment>
<comment type="catalytic activity">
    <reaction evidence="1">
        <text>aldehydo-D-ribose 5-phosphate = D-ribulose 5-phosphate</text>
        <dbReference type="Rhea" id="RHEA:14657"/>
        <dbReference type="ChEBI" id="CHEBI:58121"/>
        <dbReference type="ChEBI" id="CHEBI:58273"/>
        <dbReference type="EC" id="5.3.1.6"/>
    </reaction>
</comment>
<comment type="pathway">
    <text evidence="1">Carbohydrate degradation; pentose phosphate pathway; D-ribose 5-phosphate from D-ribulose 5-phosphate (non-oxidative stage): step 1/1.</text>
</comment>
<comment type="subunit">
    <text evidence="1">Homodimer.</text>
</comment>
<comment type="similarity">
    <text evidence="1">Belongs to the ribose 5-phosphate isomerase family.</text>
</comment>
<evidence type="ECO:0000255" key="1">
    <source>
        <dbReference type="HAMAP-Rule" id="MF_00170"/>
    </source>
</evidence>
<organism>
    <name type="scientific">Pseudomonas syringae pv. syringae (strain B728a)</name>
    <dbReference type="NCBI Taxonomy" id="205918"/>
    <lineage>
        <taxon>Bacteria</taxon>
        <taxon>Pseudomonadati</taxon>
        <taxon>Pseudomonadota</taxon>
        <taxon>Gammaproteobacteria</taxon>
        <taxon>Pseudomonadales</taxon>
        <taxon>Pseudomonadaceae</taxon>
        <taxon>Pseudomonas</taxon>
        <taxon>Pseudomonas syringae</taxon>
    </lineage>
</organism>
<accession>Q4ZLU8</accession>
<name>RPIA_PSEU2</name>
<dbReference type="EC" id="5.3.1.6" evidence="1"/>
<dbReference type="EMBL" id="CP000075">
    <property type="protein sequence ID" value="AAY39874.1"/>
    <property type="molecule type" value="Genomic_DNA"/>
</dbReference>
<dbReference type="RefSeq" id="WP_011269261.1">
    <property type="nucleotide sequence ID" value="NC_007005.1"/>
</dbReference>
<dbReference type="RefSeq" id="YP_237912.1">
    <property type="nucleotide sequence ID" value="NC_007005.1"/>
</dbReference>
<dbReference type="SMR" id="Q4ZLU8"/>
<dbReference type="STRING" id="205918.Psyr_4847"/>
<dbReference type="KEGG" id="psb:Psyr_4847"/>
<dbReference type="PATRIC" id="fig|205918.7.peg.5013"/>
<dbReference type="eggNOG" id="COG0120">
    <property type="taxonomic scope" value="Bacteria"/>
</dbReference>
<dbReference type="HOGENOM" id="CLU_056590_1_1_6"/>
<dbReference type="OrthoDB" id="5870696at2"/>
<dbReference type="UniPathway" id="UPA00115">
    <property type="reaction ID" value="UER00412"/>
</dbReference>
<dbReference type="Proteomes" id="UP000000426">
    <property type="component" value="Chromosome"/>
</dbReference>
<dbReference type="GO" id="GO:0005829">
    <property type="term" value="C:cytosol"/>
    <property type="evidence" value="ECO:0007669"/>
    <property type="project" value="TreeGrafter"/>
</dbReference>
<dbReference type="GO" id="GO:0004751">
    <property type="term" value="F:ribose-5-phosphate isomerase activity"/>
    <property type="evidence" value="ECO:0007669"/>
    <property type="project" value="UniProtKB-UniRule"/>
</dbReference>
<dbReference type="GO" id="GO:0006014">
    <property type="term" value="P:D-ribose metabolic process"/>
    <property type="evidence" value="ECO:0007669"/>
    <property type="project" value="TreeGrafter"/>
</dbReference>
<dbReference type="GO" id="GO:0009052">
    <property type="term" value="P:pentose-phosphate shunt, non-oxidative branch"/>
    <property type="evidence" value="ECO:0007669"/>
    <property type="project" value="UniProtKB-UniRule"/>
</dbReference>
<dbReference type="CDD" id="cd01398">
    <property type="entry name" value="RPI_A"/>
    <property type="match status" value="1"/>
</dbReference>
<dbReference type="FunFam" id="3.30.70.260:FF:000004">
    <property type="entry name" value="Ribose-5-phosphate isomerase A"/>
    <property type="match status" value="1"/>
</dbReference>
<dbReference type="FunFam" id="3.40.50.1360:FF:000001">
    <property type="entry name" value="Ribose-5-phosphate isomerase A"/>
    <property type="match status" value="1"/>
</dbReference>
<dbReference type="Gene3D" id="3.30.70.260">
    <property type="match status" value="1"/>
</dbReference>
<dbReference type="Gene3D" id="3.40.50.1360">
    <property type="match status" value="1"/>
</dbReference>
<dbReference type="HAMAP" id="MF_00170">
    <property type="entry name" value="Rib_5P_isom_A"/>
    <property type="match status" value="1"/>
</dbReference>
<dbReference type="InterPro" id="IPR037171">
    <property type="entry name" value="NagB/RpiA_transferase-like"/>
</dbReference>
<dbReference type="InterPro" id="IPR020672">
    <property type="entry name" value="Ribose5P_isomerase_typA_subgr"/>
</dbReference>
<dbReference type="InterPro" id="IPR004788">
    <property type="entry name" value="Ribose5P_isomerase_type_A"/>
</dbReference>
<dbReference type="NCBIfam" id="NF001924">
    <property type="entry name" value="PRK00702.1"/>
    <property type="match status" value="1"/>
</dbReference>
<dbReference type="NCBIfam" id="TIGR00021">
    <property type="entry name" value="rpiA"/>
    <property type="match status" value="1"/>
</dbReference>
<dbReference type="PANTHER" id="PTHR11934">
    <property type="entry name" value="RIBOSE-5-PHOSPHATE ISOMERASE"/>
    <property type="match status" value="1"/>
</dbReference>
<dbReference type="PANTHER" id="PTHR11934:SF0">
    <property type="entry name" value="RIBOSE-5-PHOSPHATE ISOMERASE"/>
    <property type="match status" value="1"/>
</dbReference>
<dbReference type="Pfam" id="PF06026">
    <property type="entry name" value="Rib_5-P_isom_A"/>
    <property type="match status" value="1"/>
</dbReference>
<dbReference type="SUPFAM" id="SSF75445">
    <property type="entry name" value="D-ribose-5-phosphate isomerase (RpiA), lid domain"/>
    <property type="match status" value="1"/>
</dbReference>
<dbReference type="SUPFAM" id="SSF100950">
    <property type="entry name" value="NagB/RpiA/CoA transferase-like"/>
    <property type="match status" value="1"/>
</dbReference>